<organism>
    <name type="scientific">Emericella nidulans (strain FGSC A4 / ATCC 38163 / CBS 112.46 / NRRL 194 / M139)</name>
    <name type="common">Aspergillus nidulans</name>
    <dbReference type="NCBI Taxonomy" id="227321"/>
    <lineage>
        <taxon>Eukaryota</taxon>
        <taxon>Fungi</taxon>
        <taxon>Dikarya</taxon>
        <taxon>Ascomycota</taxon>
        <taxon>Pezizomycotina</taxon>
        <taxon>Eurotiomycetes</taxon>
        <taxon>Eurotiomycetidae</taxon>
        <taxon>Eurotiales</taxon>
        <taxon>Aspergillaceae</taxon>
        <taxon>Aspergillus</taxon>
        <taxon>Aspergillus subgen. Nidulantes</taxon>
    </lineage>
</organism>
<sequence>MFLRSVSSITKPFRRIESPKQLARRMAVLPDTYADPVRIAVIGGTGLRELPGFTQVASLNIQTPWGTPSSPITILHHTHKDKTVAVAFLSRHGLHHQIAPHEVPARANIAALRSIGVRTIIAFSAVGSLQEEIKPRDFVVPDQVIDRTKGIRPFTFFEGGVVGHVPFGDPFDESVAKIVRACGHSLEGEGVKLHDRGTLICMEGPQFSTRAESKLYRSWGGSVINMSCLPEAKLAREAEIAYQMICMSTDYDCWHESTEDVTVEMVMGNMKANAVNAKHFVTAVLDELADDRNAELVQAKQYAGSVKFGLSTAQANWSPEARERMNWLFPGYFEIDLYIRYLLLIQRDIDLTSWN</sequence>
<keyword id="KW-0963">Cytoplasm</keyword>
<keyword id="KW-0328">Glycosyltransferase</keyword>
<keyword id="KW-0539">Nucleus</keyword>
<keyword id="KW-0660">Purine salvage</keyword>
<keyword id="KW-1185">Reference proteome</keyword>
<keyword id="KW-0808">Transferase</keyword>
<comment type="function">
    <text evidence="1">Catalyzes the reversible phosphorylation of S-methyl-5'-thioadenosine (MTA) to adenine and 5-methylthioribose-1-phosphate. Involved in the breakdown of MTA, a major by-product of polyamine biosynthesis. Responsible for the first step in the methionine salvage pathway after MTA has been generated from S-adenosylmethionine. Has broad substrate specificity with 6-aminopurine nucleosides as preferred substrates.</text>
</comment>
<comment type="catalytic activity">
    <reaction evidence="1">
        <text>S-methyl-5'-thioadenosine + phosphate = 5-(methylsulfanyl)-alpha-D-ribose 1-phosphate + adenine</text>
        <dbReference type="Rhea" id="RHEA:11852"/>
        <dbReference type="ChEBI" id="CHEBI:16708"/>
        <dbReference type="ChEBI" id="CHEBI:17509"/>
        <dbReference type="ChEBI" id="CHEBI:43474"/>
        <dbReference type="ChEBI" id="CHEBI:58533"/>
        <dbReference type="EC" id="2.4.2.28"/>
    </reaction>
</comment>
<comment type="pathway">
    <text evidence="1">Amino-acid biosynthesis; L-methionine biosynthesis via salvage pathway; S-methyl-5-thio-alpha-D-ribose 1-phosphate from S-methyl-5'-thioadenosine (phosphorylase route): step 1/1.</text>
</comment>
<comment type="subunit">
    <text evidence="1">Homotrimer.</text>
</comment>
<comment type="subcellular location">
    <subcellularLocation>
        <location evidence="1">Cytoplasm</location>
    </subcellularLocation>
    <subcellularLocation>
        <location evidence="1">Nucleus</location>
    </subcellularLocation>
</comment>
<comment type="similarity">
    <text evidence="1">Belongs to the PNP/MTAP phosphorylase family. MTAP subfamily.</text>
</comment>
<comment type="sequence caution" evidence="2">
    <conflict type="erroneous gene model prediction">
        <sequence resource="EMBL-CDS" id="EAA64021"/>
    </conflict>
    <text>The predicted gene AN1735 has been split into 2 genes: AN10230 and AN10233.</text>
</comment>
<feature type="chain" id="PRO_0000415128" description="S-methyl-5'-thioadenosine phosphorylase">
    <location>
        <begin position="1"/>
        <end position="355"/>
    </location>
</feature>
<feature type="binding site" evidence="1">
    <location>
        <position position="45"/>
    </location>
    <ligand>
        <name>phosphate</name>
        <dbReference type="ChEBI" id="CHEBI:43474"/>
    </ligand>
</feature>
<feature type="binding site" evidence="1">
    <location>
        <begin position="91"/>
        <end position="92"/>
    </location>
    <ligand>
        <name>phosphate</name>
        <dbReference type="ChEBI" id="CHEBI:43474"/>
    </ligand>
</feature>
<feature type="binding site" evidence="1">
    <location>
        <begin position="124"/>
        <end position="125"/>
    </location>
    <ligand>
        <name>phosphate</name>
        <dbReference type="ChEBI" id="CHEBI:43474"/>
    </ligand>
</feature>
<feature type="binding site" evidence="1">
    <location>
        <position position="226"/>
    </location>
    <ligand>
        <name>substrate</name>
    </ligand>
</feature>
<feature type="binding site" evidence="1">
    <location>
        <position position="227"/>
    </location>
    <ligand>
        <name>phosphate</name>
        <dbReference type="ChEBI" id="CHEBI:43474"/>
    </ligand>
</feature>
<feature type="binding site" evidence="1">
    <location>
        <begin position="250"/>
        <end position="252"/>
    </location>
    <ligand>
        <name>substrate</name>
    </ligand>
</feature>
<feature type="site" description="Important for substrate specificity" evidence="1">
    <location>
        <position position="208"/>
    </location>
</feature>
<feature type="site" description="Important for substrate specificity" evidence="1">
    <location>
        <position position="263"/>
    </location>
</feature>
<evidence type="ECO:0000255" key="1">
    <source>
        <dbReference type="HAMAP-Rule" id="MF_03155"/>
    </source>
</evidence>
<evidence type="ECO:0000305" key="2"/>
<protein>
    <recommendedName>
        <fullName evidence="1">S-methyl-5'-thioadenosine phosphorylase</fullName>
        <ecNumber evidence="1">2.4.2.28</ecNumber>
    </recommendedName>
    <alternativeName>
        <fullName evidence="1">5'-methylthioadenosine phosphorylase</fullName>
        <shortName evidence="1">MTA phosphorylase</shortName>
        <shortName evidence="1">MTAP</shortName>
        <shortName evidence="1">MTAPase</shortName>
    </alternativeName>
</protein>
<dbReference type="EC" id="2.4.2.28" evidence="1"/>
<dbReference type="EMBL" id="AACD01000027">
    <property type="protein sequence ID" value="EAA64021.1"/>
    <property type="status" value="ALT_SEQ"/>
    <property type="molecule type" value="Genomic_DNA"/>
</dbReference>
<dbReference type="EMBL" id="BN001307">
    <property type="protein sequence ID" value="CBF85464.1"/>
    <property type="molecule type" value="Genomic_DNA"/>
</dbReference>
<dbReference type="RefSeq" id="XP_659339.1">
    <property type="nucleotide sequence ID" value="XM_654247.1"/>
</dbReference>
<dbReference type="SMR" id="C8VP37"/>
<dbReference type="FunCoup" id="C8VP37">
    <property type="interactions" value="401"/>
</dbReference>
<dbReference type="STRING" id="227321.C8VP37"/>
<dbReference type="EnsemblFungi" id="CBF85464">
    <property type="protein sequence ID" value="CBF85464"/>
    <property type="gene ID" value="ANIA_10230"/>
</dbReference>
<dbReference type="VEuPathDB" id="FungiDB:AN10230"/>
<dbReference type="eggNOG" id="KOG3985">
    <property type="taxonomic scope" value="Eukaryota"/>
</dbReference>
<dbReference type="HOGENOM" id="CLU_016264_0_0_1"/>
<dbReference type="InParanoid" id="C8VP37"/>
<dbReference type="OMA" id="ADPFCPE"/>
<dbReference type="OrthoDB" id="431409at2759"/>
<dbReference type="UniPathway" id="UPA00904">
    <property type="reaction ID" value="UER00873"/>
</dbReference>
<dbReference type="Proteomes" id="UP000000560">
    <property type="component" value="Chromosome VII"/>
</dbReference>
<dbReference type="GO" id="GO:0005829">
    <property type="term" value="C:cytosol"/>
    <property type="evidence" value="ECO:0000318"/>
    <property type="project" value="GO_Central"/>
</dbReference>
<dbReference type="GO" id="GO:0005576">
    <property type="term" value="C:extracellular region"/>
    <property type="evidence" value="ECO:0000314"/>
    <property type="project" value="AspGD"/>
</dbReference>
<dbReference type="GO" id="GO:0005634">
    <property type="term" value="C:nucleus"/>
    <property type="evidence" value="ECO:0007669"/>
    <property type="project" value="UniProtKB-SubCell"/>
</dbReference>
<dbReference type="GO" id="GO:0003729">
    <property type="term" value="F:mRNA binding"/>
    <property type="evidence" value="ECO:0007669"/>
    <property type="project" value="EnsemblFungi"/>
</dbReference>
<dbReference type="GO" id="GO:0017061">
    <property type="term" value="F:S-methyl-5-thioadenosine phosphorylase activity"/>
    <property type="evidence" value="ECO:0000318"/>
    <property type="project" value="GO_Central"/>
</dbReference>
<dbReference type="GO" id="GO:0006537">
    <property type="term" value="P:glutamate biosynthetic process"/>
    <property type="evidence" value="ECO:0007669"/>
    <property type="project" value="EnsemblFungi"/>
</dbReference>
<dbReference type="GO" id="GO:0019509">
    <property type="term" value="P:L-methionine salvage from methylthioadenosine"/>
    <property type="evidence" value="ECO:0000318"/>
    <property type="project" value="GO_Central"/>
</dbReference>
<dbReference type="GO" id="GO:0006166">
    <property type="term" value="P:purine ribonucleoside salvage"/>
    <property type="evidence" value="ECO:0007669"/>
    <property type="project" value="UniProtKB-KW"/>
</dbReference>
<dbReference type="CDD" id="cd09010">
    <property type="entry name" value="MTAP_SsMTAPII_like_MTIP"/>
    <property type="match status" value="1"/>
</dbReference>
<dbReference type="FunFam" id="3.40.50.1580:FF:000008">
    <property type="entry name" value="S-methyl-5'-thioadenosine phosphorylase"/>
    <property type="match status" value="1"/>
</dbReference>
<dbReference type="Gene3D" id="3.40.50.1580">
    <property type="entry name" value="Nucleoside phosphorylase domain"/>
    <property type="match status" value="1"/>
</dbReference>
<dbReference type="HAMAP" id="MF_01963">
    <property type="entry name" value="MTAP"/>
    <property type="match status" value="1"/>
</dbReference>
<dbReference type="InterPro" id="IPR010044">
    <property type="entry name" value="MTAP"/>
</dbReference>
<dbReference type="InterPro" id="IPR000845">
    <property type="entry name" value="Nucleoside_phosphorylase_d"/>
</dbReference>
<dbReference type="InterPro" id="IPR035994">
    <property type="entry name" value="Nucleoside_phosphorylase_sf"/>
</dbReference>
<dbReference type="InterPro" id="IPR018099">
    <property type="entry name" value="Purine_phosphorylase-2_CS"/>
</dbReference>
<dbReference type="NCBIfam" id="TIGR01694">
    <property type="entry name" value="MTAP"/>
    <property type="match status" value="1"/>
</dbReference>
<dbReference type="PANTHER" id="PTHR42679">
    <property type="entry name" value="S-METHYL-5'-THIOADENOSINE PHOSPHORYLASE"/>
    <property type="match status" value="1"/>
</dbReference>
<dbReference type="PANTHER" id="PTHR42679:SF2">
    <property type="entry name" value="S-METHYL-5'-THIOADENOSINE PHOSPHORYLASE"/>
    <property type="match status" value="1"/>
</dbReference>
<dbReference type="Pfam" id="PF01048">
    <property type="entry name" value="PNP_UDP_1"/>
    <property type="match status" value="1"/>
</dbReference>
<dbReference type="SUPFAM" id="SSF53167">
    <property type="entry name" value="Purine and uridine phosphorylases"/>
    <property type="match status" value="1"/>
</dbReference>
<dbReference type="PROSITE" id="PS01240">
    <property type="entry name" value="PNP_MTAP_2"/>
    <property type="match status" value="1"/>
</dbReference>
<gene>
    <name type="ORF">AN10230</name>
</gene>
<name>MTAP_EMENI</name>
<reference key="1">
    <citation type="journal article" date="2005" name="Nature">
        <title>Sequencing of Aspergillus nidulans and comparative analysis with A. fumigatus and A. oryzae.</title>
        <authorList>
            <person name="Galagan J.E."/>
            <person name="Calvo S.E."/>
            <person name="Cuomo C."/>
            <person name="Ma L.-J."/>
            <person name="Wortman J.R."/>
            <person name="Batzoglou S."/>
            <person name="Lee S.-I."/>
            <person name="Bastuerkmen M."/>
            <person name="Spevak C.C."/>
            <person name="Clutterbuck J."/>
            <person name="Kapitonov V."/>
            <person name="Jurka J."/>
            <person name="Scazzocchio C."/>
            <person name="Farman M.L."/>
            <person name="Butler J."/>
            <person name="Purcell S."/>
            <person name="Harris S."/>
            <person name="Braus G.H."/>
            <person name="Draht O."/>
            <person name="Busch S."/>
            <person name="D'Enfert C."/>
            <person name="Bouchier C."/>
            <person name="Goldman G.H."/>
            <person name="Bell-Pedersen D."/>
            <person name="Griffiths-Jones S."/>
            <person name="Doonan J.H."/>
            <person name="Yu J."/>
            <person name="Vienken K."/>
            <person name="Pain A."/>
            <person name="Freitag M."/>
            <person name="Selker E.U."/>
            <person name="Archer D.B."/>
            <person name="Penalva M.A."/>
            <person name="Oakley B.R."/>
            <person name="Momany M."/>
            <person name="Tanaka T."/>
            <person name="Kumagai T."/>
            <person name="Asai K."/>
            <person name="Machida M."/>
            <person name="Nierman W.C."/>
            <person name="Denning D.W."/>
            <person name="Caddick M.X."/>
            <person name="Hynes M."/>
            <person name="Paoletti M."/>
            <person name="Fischer R."/>
            <person name="Miller B.L."/>
            <person name="Dyer P.S."/>
            <person name="Sachs M.S."/>
            <person name="Osmani S.A."/>
            <person name="Birren B.W."/>
        </authorList>
    </citation>
    <scope>NUCLEOTIDE SEQUENCE [LARGE SCALE GENOMIC DNA]</scope>
    <source>
        <strain>FGSC A4 / ATCC 38163 / CBS 112.46 / NRRL 194 / M139</strain>
    </source>
</reference>
<reference key="2">
    <citation type="journal article" date="2009" name="Fungal Genet. Biol.">
        <title>The 2008 update of the Aspergillus nidulans genome annotation: a community effort.</title>
        <authorList>
            <person name="Wortman J.R."/>
            <person name="Gilsenan J.M."/>
            <person name="Joardar V."/>
            <person name="Deegan J."/>
            <person name="Clutterbuck J."/>
            <person name="Andersen M.R."/>
            <person name="Archer D."/>
            <person name="Bencina M."/>
            <person name="Braus G."/>
            <person name="Coutinho P."/>
            <person name="von Dohren H."/>
            <person name="Doonan J."/>
            <person name="Driessen A.J."/>
            <person name="Durek P."/>
            <person name="Espeso E."/>
            <person name="Fekete E."/>
            <person name="Flipphi M."/>
            <person name="Estrada C.G."/>
            <person name="Geysens S."/>
            <person name="Goldman G."/>
            <person name="de Groot P.W."/>
            <person name="Hansen K."/>
            <person name="Harris S.D."/>
            <person name="Heinekamp T."/>
            <person name="Helmstaedt K."/>
            <person name="Henrissat B."/>
            <person name="Hofmann G."/>
            <person name="Homan T."/>
            <person name="Horio T."/>
            <person name="Horiuchi H."/>
            <person name="James S."/>
            <person name="Jones M."/>
            <person name="Karaffa L."/>
            <person name="Karanyi Z."/>
            <person name="Kato M."/>
            <person name="Keller N."/>
            <person name="Kelly D.E."/>
            <person name="Kiel J.A."/>
            <person name="Kim J.M."/>
            <person name="van der Klei I.J."/>
            <person name="Klis F.M."/>
            <person name="Kovalchuk A."/>
            <person name="Krasevec N."/>
            <person name="Kubicek C.P."/>
            <person name="Liu B."/>
            <person name="Maccabe A."/>
            <person name="Meyer V."/>
            <person name="Mirabito P."/>
            <person name="Miskei M."/>
            <person name="Mos M."/>
            <person name="Mullins J."/>
            <person name="Nelson D.R."/>
            <person name="Nielsen J."/>
            <person name="Oakley B.R."/>
            <person name="Osmani S.A."/>
            <person name="Pakula T."/>
            <person name="Paszewski A."/>
            <person name="Paulsen I."/>
            <person name="Pilsyk S."/>
            <person name="Pocsi I."/>
            <person name="Punt P.J."/>
            <person name="Ram A.F."/>
            <person name="Ren Q."/>
            <person name="Robellet X."/>
            <person name="Robson G."/>
            <person name="Seiboth B."/>
            <person name="van Solingen P."/>
            <person name="Specht T."/>
            <person name="Sun J."/>
            <person name="Taheri-Talesh N."/>
            <person name="Takeshita N."/>
            <person name="Ussery D."/>
            <person name="vanKuyk P.A."/>
            <person name="Visser H."/>
            <person name="van de Vondervoort P.J."/>
            <person name="de Vries R.P."/>
            <person name="Walton J."/>
            <person name="Xiang X."/>
            <person name="Xiong Y."/>
            <person name="Zeng A.P."/>
            <person name="Brandt B.W."/>
            <person name="Cornell M.J."/>
            <person name="van den Hondel C.A."/>
            <person name="Visser J."/>
            <person name="Oliver S.G."/>
            <person name="Turner G."/>
        </authorList>
    </citation>
    <scope>GENOME REANNOTATION</scope>
    <source>
        <strain>FGSC A4 / ATCC 38163 / CBS 112.46 / NRRL 194 / M139</strain>
    </source>
</reference>
<proteinExistence type="inferred from homology"/>
<accession>C8VP37</accession>
<accession>Q5BCJ5</accession>